<protein>
    <recommendedName>
        <fullName evidence="1">Large ribosomal subunit protein bL25</fullName>
    </recommendedName>
    <alternativeName>
        <fullName evidence="3">50S ribosomal protein L25</fullName>
    </alternativeName>
    <alternativeName>
        <fullName evidence="1">General stress protein CTC</fullName>
    </alternativeName>
</protein>
<accession>B2GLJ3</accession>
<sequence>MVDVITIPATLRTEFGKGYARRVRANDKIPAVIYGHGAEPLHVILPGHEMMLASRNSNAVLDINVDGEGHLAMIKEVQRHAVRPEILHIDLLTVRRGERVEVEIPVHVEGEVAPTAIHNVEENVLVVEADALKVPEYLTVDITDLEVGEHVYAKDVTLPGNVTLVSDPELLVVNVSEPVEQDLGEESETEEEGAEGEKPAESTGEEPGDDE</sequence>
<comment type="function">
    <text evidence="1">This is one of the proteins that binds to the 5S RNA in the ribosome where it forms part of the central protuberance.</text>
</comment>
<comment type="subunit">
    <text evidence="1">Part of the 50S ribosomal subunit; part of the 5S rRNA/L5/L18/L25 subcomplex. Contacts the 5S rRNA. Binds to the 5S rRNA independently of L5 and L18.</text>
</comment>
<comment type="similarity">
    <text evidence="1">Belongs to the bacterial ribosomal protein bL25 family. CTC subfamily.</text>
</comment>
<proteinExistence type="inferred from homology"/>
<reference key="1">
    <citation type="journal article" date="2008" name="J. Bacteriol.">
        <title>Complete genome sequence of the soil actinomycete Kocuria rhizophila.</title>
        <authorList>
            <person name="Takarada H."/>
            <person name="Sekine M."/>
            <person name="Kosugi H."/>
            <person name="Matsuo Y."/>
            <person name="Fujisawa T."/>
            <person name="Omata S."/>
            <person name="Kishi E."/>
            <person name="Shimizu A."/>
            <person name="Tsukatani N."/>
            <person name="Tanikawa S."/>
            <person name="Fujita N."/>
            <person name="Harayama S."/>
        </authorList>
    </citation>
    <scope>NUCLEOTIDE SEQUENCE [LARGE SCALE GENOMIC DNA]</scope>
    <source>
        <strain>ATCC 9341 / DSM 348 / NBRC 103217 / DC2201</strain>
    </source>
</reference>
<dbReference type="EMBL" id="AP009152">
    <property type="protein sequence ID" value="BAG30067.1"/>
    <property type="molecule type" value="Genomic_DNA"/>
</dbReference>
<dbReference type="RefSeq" id="WP_012398788.1">
    <property type="nucleotide sequence ID" value="NC_010617.1"/>
</dbReference>
<dbReference type="SMR" id="B2GLJ3"/>
<dbReference type="STRING" id="378753.KRH_17200"/>
<dbReference type="KEGG" id="krh:KRH_17200"/>
<dbReference type="eggNOG" id="COG1825">
    <property type="taxonomic scope" value="Bacteria"/>
</dbReference>
<dbReference type="HOGENOM" id="CLU_075939_1_0_11"/>
<dbReference type="OrthoDB" id="5242980at2"/>
<dbReference type="Proteomes" id="UP000008838">
    <property type="component" value="Chromosome"/>
</dbReference>
<dbReference type="GO" id="GO:0022625">
    <property type="term" value="C:cytosolic large ribosomal subunit"/>
    <property type="evidence" value="ECO:0007669"/>
    <property type="project" value="TreeGrafter"/>
</dbReference>
<dbReference type="GO" id="GO:0008097">
    <property type="term" value="F:5S rRNA binding"/>
    <property type="evidence" value="ECO:0007669"/>
    <property type="project" value="InterPro"/>
</dbReference>
<dbReference type="GO" id="GO:0003735">
    <property type="term" value="F:structural constituent of ribosome"/>
    <property type="evidence" value="ECO:0007669"/>
    <property type="project" value="InterPro"/>
</dbReference>
<dbReference type="GO" id="GO:0006412">
    <property type="term" value="P:translation"/>
    <property type="evidence" value="ECO:0007669"/>
    <property type="project" value="UniProtKB-UniRule"/>
</dbReference>
<dbReference type="CDD" id="cd00495">
    <property type="entry name" value="Ribosomal_L25_TL5_CTC"/>
    <property type="match status" value="1"/>
</dbReference>
<dbReference type="Gene3D" id="2.170.120.20">
    <property type="entry name" value="Ribosomal protein L25, beta domain"/>
    <property type="match status" value="1"/>
</dbReference>
<dbReference type="Gene3D" id="2.40.240.10">
    <property type="entry name" value="Ribosomal Protein L25, Chain P"/>
    <property type="match status" value="1"/>
</dbReference>
<dbReference type="HAMAP" id="MF_01334">
    <property type="entry name" value="Ribosomal_bL25_CTC"/>
    <property type="match status" value="1"/>
</dbReference>
<dbReference type="InterPro" id="IPR020056">
    <property type="entry name" value="Rbsml_bL25/Gln-tRNA_synth_N"/>
</dbReference>
<dbReference type="InterPro" id="IPR011035">
    <property type="entry name" value="Ribosomal_bL25/Gln-tRNA_synth"/>
</dbReference>
<dbReference type="InterPro" id="IPR020057">
    <property type="entry name" value="Ribosomal_bL25_b-dom"/>
</dbReference>
<dbReference type="InterPro" id="IPR037121">
    <property type="entry name" value="Ribosomal_bL25_C"/>
</dbReference>
<dbReference type="InterPro" id="IPR001021">
    <property type="entry name" value="Ribosomal_bL25_long"/>
</dbReference>
<dbReference type="InterPro" id="IPR029751">
    <property type="entry name" value="Ribosomal_L25_dom"/>
</dbReference>
<dbReference type="InterPro" id="IPR020930">
    <property type="entry name" value="Ribosomal_uL5_bac-type"/>
</dbReference>
<dbReference type="NCBIfam" id="TIGR00731">
    <property type="entry name" value="bL25_bact_ctc"/>
    <property type="match status" value="1"/>
</dbReference>
<dbReference type="NCBIfam" id="NF004131">
    <property type="entry name" value="PRK05618.2-1"/>
    <property type="match status" value="1"/>
</dbReference>
<dbReference type="NCBIfam" id="NF004612">
    <property type="entry name" value="PRK05943.1"/>
    <property type="match status" value="1"/>
</dbReference>
<dbReference type="PANTHER" id="PTHR33284">
    <property type="entry name" value="RIBOSOMAL PROTEIN L25/GLN-TRNA SYNTHETASE, ANTI-CODON-BINDING DOMAIN-CONTAINING PROTEIN"/>
    <property type="match status" value="1"/>
</dbReference>
<dbReference type="PANTHER" id="PTHR33284:SF1">
    <property type="entry name" value="RIBOSOMAL PROTEIN L25_GLN-TRNA SYNTHETASE, ANTI-CODON-BINDING DOMAIN-CONTAINING PROTEIN"/>
    <property type="match status" value="1"/>
</dbReference>
<dbReference type="Pfam" id="PF01386">
    <property type="entry name" value="Ribosomal_L25p"/>
    <property type="match status" value="1"/>
</dbReference>
<dbReference type="Pfam" id="PF14693">
    <property type="entry name" value="Ribosomal_TL5_C"/>
    <property type="match status" value="1"/>
</dbReference>
<dbReference type="SUPFAM" id="SSF50715">
    <property type="entry name" value="Ribosomal protein L25-like"/>
    <property type="match status" value="1"/>
</dbReference>
<keyword id="KW-1185">Reference proteome</keyword>
<keyword id="KW-0687">Ribonucleoprotein</keyword>
<keyword id="KW-0689">Ribosomal protein</keyword>
<keyword id="KW-0694">RNA-binding</keyword>
<keyword id="KW-0699">rRNA-binding</keyword>
<organism>
    <name type="scientific">Kocuria rhizophila (strain ATCC 9341 / DSM 348 / NBRC 103217 / DC2201)</name>
    <dbReference type="NCBI Taxonomy" id="378753"/>
    <lineage>
        <taxon>Bacteria</taxon>
        <taxon>Bacillati</taxon>
        <taxon>Actinomycetota</taxon>
        <taxon>Actinomycetes</taxon>
        <taxon>Micrococcales</taxon>
        <taxon>Micrococcaceae</taxon>
        <taxon>Kocuria</taxon>
    </lineage>
</organism>
<name>RL25_KOCRD</name>
<feature type="chain" id="PRO_1000142529" description="Large ribosomal subunit protein bL25">
    <location>
        <begin position="1"/>
        <end position="211"/>
    </location>
</feature>
<feature type="region of interest" description="Disordered" evidence="2">
    <location>
        <begin position="175"/>
        <end position="211"/>
    </location>
</feature>
<feature type="compositionally biased region" description="Acidic residues" evidence="2">
    <location>
        <begin position="179"/>
        <end position="194"/>
    </location>
</feature>
<evidence type="ECO:0000255" key="1">
    <source>
        <dbReference type="HAMAP-Rule" id="MF_01334"/>
    </source>
</evidence>
<evidence type="ECO:0000256" key="2">
    <source>
        <dbReference type="SAM" id="MobiDB-lite"/>
    </source>
</evidence>
<evidence type="ECO:0000305" key="3"/>
<gene>
    <name evidence="1" type="primary">rplY</name>
    <name evidence="1" type="synonym">ctc</name>
    <name type="ordered locus">KRH_17200</name>
</gene>